<sequence length="83" mass="9213">MPNIKSAIKRVNTTHTAEERNISQKNEMRTAVKRAHSALESNADNKADLLSFALKKVDKAAQRNLIHDNKAARIKSSLMTAAK</sequence>
<protein>
    <recommendedName>
        <fullName evidence="1">Small ribosomal subunit protein bS20</fullName>
    </recommendedName>
    <alternativeName>
        <fullName evidence="3">30S ribosomal protein S20</fullName>
    </alternativeName>
</protein>
<proteinExistence type="inferred from homology"/>
<feature type="chain" id="PRO_0000224955" description="Small ribosomal subunit protein bS20">
    <location>
        <begin position="1"/>
        <end position="83"/>
    </location>
</feature>
<feature type="region of interest" description="Disordered" evidence="2">
    <location>
        <begin position="1"/>
        <end position="25"/>
    </location>
</feature>
<feature type="compositionally biased region" description="Basic and acidic residues" evidence="2">
    <location>
        <begin position="16"/>
        <end position="25"/>
    </location>
</feature>
<gene>
    <name evidence="1" type="primary">rpsT</name>
    <name type="ordered locus">SSP1172</name>
</gene>
<name>RS20_STAS1</name>
<accession>Q49Y27</accession>
<organism>
    <name type="scientific">Staphylococcus saprophyticus subsp. saprophyticus (strain ATCC 15305 / DSM 20229 / NCIMB 8711 / NCTC 7292 / S-41)</name>
    <dbReference type="NCBI Taxonomy" id="342451"/>
    <lineage>
        <taxon>Bacteria</taxon>
        <taxon>Bacillati</taxon>
        <taxon>Bacillota</taxon>
        <taxon>Bacilli</taxon>
        <taxon>Bacillales</taxon>
        <taxon>Staphylococcaceae</taxon>
        <taxon>Staphylococcus</taxon>
    </lineage>
</organism>
<comment type="function">
    <text evidence="1">Binds directly to 16S ribosomal RNA.</text>
</comment>
<comment type="similarity">
    <text evidence="1">Belongs to the bacterial ribosomal protein bS20 family.</text>
</comment>
<dbReference type="EMBL" id="AP008934">
    <property type="protein sequence ID" value="BAE18317.1"/>
    <property type="molecule type" value="Genomic_DNA"/>
</dbReference>
<dbReference type="RefSeq" id="WP_002483148.1">
    <property type="nucleotide sequence ID" value="NZ_MTGA01000038.1"/>
</dbReference>
<dbReference type="SMR" id="Q49Y27"/>
<dbReference type="GeneID" id="66867401"/>
<dbReference type="KEGG" id="ssp:SSP1172"/>
<dbReference type="eggNOG" id="COG0268">
    <property type="taxonomic scope" value="Bacteria"/>
</dbReference>
<dbReference type="HOGENOM" id="CLU_160655_1_1_9"/>
<dbReference type="OrthoDB" id="9808392at2"/>
<dbReference type="Proteomes" id="UP000006371">
    <property type="component" value="Chromosome"/>
</dbReference>
<dbReference type="GO" id="GO:0005829">
    <property type="term" value="C:cytosol"/>
    <property type="evidence" value="ECO:0007669"/>
    <property type="project" value="TreeGrafter"/>
</dbReference>
<dbReference type="GO" id="GO:0015935">
    <property type="term" value="C:small ribosomal subunit"/>
    <property type="evidence" value="ECO:0007669"/>
    <property type="project" value="TreeGrafter"/>
</dbReference>
<dbReference type="GO" id="GO:0070181">
    <property type="term" value="F:small ribosomal subunit rRNA binding"/>
    <property type="evidence" value="ECO:0007669"/>
    <property type="project" value="TreeGrafter"/>
</dbReference>
<dbReference type="GO" id="GO:0003735">
    <property type="term" value="F:structural constituent of ribosome"/>
    <property type="evidence" value="ECO:0007669"/>
    <property type="project" value="InterPro"/>
</dbReference>
<dbReference type="GO" id="GO:0006412">
    <property type="term" value="P:translation"/>
    <property type="evidence" value="ECO:0007669"/>
    <property type="project" value="UniProtKB-UniRule"/>
</dbReference>
<dbReference type="Gene3D" id="1.20.58.110">
    <property type="entry name" value="Ribosomal protein S20"/>
    <property type="match status" value="1"/>
</dbReference>
<dbReference type="HAMAP" id="MF_00500">
    <property type="entry name" value="Ribosomal_bS20"/>
    <property type="match status" value="1"/>
</dbReference>
<dbReference type="InterPro" id="IPR002583">
    <property type="entry name" value="Ribosomal_bS20"/>
</dbReference>
<dbReference type="InterPro" id="IPR036510">
    <property type="entry name" value="Ribosomal_bS20_sf"/>
</dbReference>
<dbReference type="NCBIfam" id="TIGR00029">
    <property type="entry name" value="S20"/>
    <property type="match status" value="1"/>
</dbReference>
<dbReference type="PANTHER" id="PTHR33398">
    <property type="entry name" value="30S RIBOSOMAL PROTEIN S20"/>
    <property type="match status" value="1"/>
</dbReference>
<dbReference type="PANTHER" id="PTHR33398:SF1">
    <property type="entry name" value="SMALL RIBOSOMAL SUBUNIT PROTEIN BS20C"/>
    <property type="match status" value="1"/>
</dbReference>
<dbReference type="Pfam" id="PF01649">
    <property type="entry name" value="Ribosomal_S20p"/>
    <property type="match status" value="1"/>
</dbReference>
<dbReference type="SUPFAM" id="SSF46992">
    <property type="entry name" value="Ribosomal protein S20"/>
    <property type="match status" value="1"/>
</dbReference>
<keyword id="KW-1185">Reference proteome</keyword>
<keyword id="KW-0687">Ribonucleoprotein</keyword>
<keyword id="KW-0689">Ribosomal protein</keyword>
<keyword id="KW-0694">RNA-binding</keyword>
<keyword id="KW-0699">rRNA-binding</keyword>
<evidence type="ECO:0000255" key="1">
    <source>
        <dbReference type="HAMAP-Rule" id="MF_00500"/>
    </source>
</evidence>
<evidence type="ECO:0000256" key="2">
    <source>
        <dbReference type="SAM" id="MobiDB-lite"/>
    </source>
</evidence>
<evidence type="ECO:0000305" key="3"/>
<reference key="1">
    <citation type="journal article" date="2005" name="Proc. Natl. Acad. Sci. U.S.A.">
        <title>Whole genome sequence of Staphylococcus saprophyticus reveals the pathogenesis of uncomplicated urinary tract infection.</title>
        <authorList>
            <person name="Kuroda M."/>
            <person name="Yamashita A."/>
            <person name="Hirakawa H."/>
            <person name="Kumano M."/>
            <person name="Morikawa K."/>
            <person name="Higashide M."/>
            <person name="Maruyama A."/>
            <person name="Inose Y."/>
            <person name="Matoba K."/>
            <person name="Toh H."/>
            <person name="Kuhara S."/>
            <person name="Hattori M."/>
            <person name="Ohta T."/>
        </authorList>
    </citation>
    <scope>NUCLEOTIDE SEQUENCE [LARGE SCALE GENOMIC DNA]</scope>
    <source>
        <strain>ATCC 15305 / DSM 20229 / NCIMB 8711 / NCTC 7292 / S-41</strain>
    </source>
</reference>